<sequence>MIEPNYLPFILIGGGIIFVVLFFHYVPFFLWLSAKVSGVRISLVQLFLMRIRNVPPYVIVPAMIEAHKAGLSNITRDELEAHYMAGGHVEKVVHALVSASKANIELSFQMATGIDLAGRDVFEAVQMSVNPKVIDTPPVTAVAKDGIQLIAKARVTVRANIRQLVGGAGEDTILARVGEGIVSSIGSSENHKSVLENPDSISKLVLRKGLDAGTAFEILSIDIADIDIGRNIGAALQIDQANADKNIAQAKAEERRAMAVALEQEMKAKAEEARANVIQAEAEVPKAMAEAFRSGNLGIMDYYRMKNIQADTSMRENIAKPETTFGNEPLSK</sequence>
<accession>A6L6E5</accession>
<name>FLOA_PHOV8</name>
<keyword id="KW-1003">Cell membrane</keyword>
<keyword id="KW-0472">Membrane</keyword>
<keyword id="KW-0812">Transmembrane</keyword>
<keyword id="KW-1133">Transmembrane helix</keyword>
<gene>
    <name evidence="1" type="primary">floA</name>
    <name type="ordered locus">BVU_3648</name>
</gene>
<evidence type="ECO:0000255" key="1">
    <source>
        <dbReference type="HAMAP-Rule" id="MF_01562"/>
    </source>
</evidence>
<dbReference type="EMBL" id="CP000139">
    <property type="protein sequence ID" value="ABR41259.1"/>
    <property type="molecule type" value="Genomic_DNA"/>
</dbReference>
<dbReference type="RefSeq" id="WP_005839405.1">
    <property type="nucleotide sequence ID" value="NZ_JANSWM010000066.1"/>
</dbReference>
<dbReference type="SMR" id="A6L6E5"/>
<dbReference type="STRING" id="435590.BVU_3648"/>
<dbReference type="PaxDb" id="435590-BVU_3648"/>
<dbReference type="DNASU" id="5304607"/>
<dbReference type="GeneID" id="93447657"/>
<dbReference type="KEGG" id="bvu:BVU_3648"/>
<dbReference type="eggNOG" id="COG4864">
    <property type="taxonomic scope" value="Bacteria"/>
</dbReference>
<dbReference type="HOGENOM" id="CLU_836378_0_0_10"/>
<dbReference type="Proteomes" id="UP000002861">
    <property type="component" value="Chromosome"/>
</dbReference>
<dbReference type="GO" id="GO:0045121">
    <property type="term" value="C:membrane raft"/>
    <property type="evidence" value="ECO:0007669"/>
    <property type="project" value="UniProtKB-SubCell"/>
</dbReference>
<dbReference type="GO" id="GO:0005886">
    <property type="term" value="C:plasma membrane"/>
    <property type="evidence" value="ECO:0007669"/>
    <property type="project" value="UniProtKB-SubCell"/>
</dbReference>
<dbReference type="HAMAP" id="MF_01562">
    <property type="entry name" value="FloA"/>
    <property type="match status" value="1"/>
</dbReference>
<dbReference type="InterPro" id="IPR022853">
    <property type="entry name" value="FloA"/>
</dbReference>
<dbReference type="NCBIfam" id="NF010186">
    <property type="entry name" value="PRK13665.1"/>
    <property type="match status" value="1"/>
</dbReference>
<dbReference type="Pfam" id="PF12127">
    <property type="entry name" value="FloA"/>
    <property type="match status" value="1"/>
</dbReference>
<comment type="function">
    <text evidence="1">Found in functional membrane microdomains (FMM) that may be equivalent to eukaryotic membrane rafts. FMMs are highly dynamic and increase in number as cells age. Flotillins are thought to be important factors in membrane fluidity.</text>
</comment>
<comment type="subunit">
    <text evidence="1">Homooligomerizes.</text>
</comment>
<comment type="subcellular location">
    <subcellularLocation>
        <location evidence="1">Cell membrane</location>
        <topology evidence="1">Single-pass membrane protein</topology>
    </subcellularLocation>
    <subcellularLocation>
        <location evidence="1">Membrane raft</location>
        <topology evidence="1">Single-pass membrane protein</topology>
    </subcellularLocation>
</comment>
<comment type="similarity">
    <text evidence="1">Belongs to the flotillin-like FloA family.</text>
</comment>
<feature type="chain" id="PRO_1000069041" description="Flotillin-like protein FloA">
    <location>
        <begin position="1"/>
        <end position="332"/>
    </location>
</feature>
<feature type="transmembrane region" description="Helical" evidence="1">
    <location>
        <begin position="9"/>
        <end position="29"/>
    </location>
</feature>
<protein>
    <recommendedName>
        <fullName evidence="1">Flotillin-like protein FloA</fullName>
    </recommendedName>
</protein>
<reference key="1">
    <citation type="journal article" date="2007" name="PLoS Biol.">
        <title>Evolution of symbiotic bacteria in the distal human intestine.</title>
        <authorList>
            <person name="Xu J."/>
            <person name="Mahowald M.A."/>
            <person name="Ley R.E."/>
            <person name="Lozupone C.A."/>
            <person name="Hamady M."/>
            <person name="Martens E.C."/>
            <person name="Henrissat B."/>
            <person name="Coutinho P.M."/>
            <person name="Minx P."/>
            <person name="Latreille P."/>
            <person name="Cordum H."/>
            <person name="Van Brunt A."/>
            <person name="Kim K."/>
            <person name="Fulton R.S."/>
            <person name="Fulton L.A."/>
            <person name="Clifton S.W."/>
            <person name="Wilson R.K."/>
            <person name="Knight R.D."/>
            <person name="Gordon J.I."/>
        </authorList>
    </citation>
    <scope>NUCLEOTIDE SEQUENCE [LARGE SCALE GENOMIC DNA]</scope>
    <source>
        <strain>ATCC 8482 / DSM 1447 / JCM 5826 / CCUG 4940 / NBRC 14291 / NCTC 11154</strain>
    </source>
</reference>
<proteinExistence type="inferred from homology"/>
<organism>
    <name type="scientific">Phocaeicola vulgatus (strain ATCC 8482 / DSM 1447 / JCM 5826 / CCUG 4940 / NBRC 14291 / NCTC 11154)</name>
    <name type="common">Bacteroides vulgatus</name>
    <dbReference type="NCBI Taxonomy" id="435590"/>
    <lineage>
        <taxon>Bacteria</taxon>
        <taxon>Pseudomonadati</taxon>
        <taxon>Bacteroidota</taxon>
        <taxon>Bacteroidia</taxon>
        <taxon>Bacteroidales</taxon>
        <taxon>Bacteroidaceae</taxon>
        <taxon>Phocaeicola</taxon>
    </lineage>
</organism>